<keyword id="KW-0025">Alternative splicing</keyword>
<keyword id="KW-0238">DNA-binding</keyword>
<keyword id="KW-0539">Nucleus</keyword>
<keyword id="KW-1185">Reference proteome</keyword>
<keyword id="KW-0804">Transcription</keyword>
<keyword id="KW-0805">Transcription regulation</keyword>
<protein>
    <recommendedName>
        <fullName>Transcription factor bHLH121</fullName>
    </recommendedName>
    <alternativeName>
        <fullName>Basic helix-loop-helix protein 121</fullName>
        <shortName>AtbHLH121</shortName>
        <shortName>bHLH 121</shortName>
    </alternativeName>
    <alternativeName>
        <fullName>Transcription factor EN 138</fullName>
    </alternativeName>
    <alternativeName>
        <fullName>bHLH transcription factor bHLH121</fullName>
    </alternativeName>
</protein>
<organism>
    <name type="scientific">Arabidopsis thaliana</name>
    <name type="common">Mouse-ear cress</name>
    <dbReference type="NCBI Taxonomy" id="3702"/>
    <lineage>
        <taxon>Eukaryota</taxon>
        <taxon>Viridiplantae</taxon>
        <taxon>Streptophyta</taxon>
        <taxon>Embryophyta</taxon>
        <taxon>Tracheophyta</taxon>
        <taxon>Spermatophyta</taxon>
        <taxon>Magnoliopsida</taxon>
        <taxon>eudicotyledons</taxon>
        <taxon>Gunneridae</taxon>
        <taxon>Pentapetalae</taxon>
        <taxon>rosids</taxon>
        <taxon>malvids</taxon>
        <taxon>Brassicales</taxon>
        <taxon>Brassicaceae</taxon>
        <taxon>Camelineae</taxon>
        <taxon>Arabidopsis</taxon>
    </lineage>
</organism>
<feature type="chain" id="PRO_0000358806" description="Transcription factor bHLH121">
    <location>
        <begin position="1"/>
        <end position="337"/>
    </location>
</feature>
<feature type="domain" description="bHLH" evidence="1">
    <location>
        <begin position="58"/>
        <end position="108"/>
    </location>
</feature>
<feature type="region of interest" description="Disordered" evidence="2">
    <location>
        <begin position="235"/>
        <end position="337"/>
    </location>
</feature>
<feature type="compositionally biased region" description="Basic and acidic residues" evidence="2">
    <location>
        <begin position="244"/>
        <end position="263"/>
    </location>
</feature>
<feature type="compositionally biased region" description="Basic and acidic residues" evidence="2">
    <location>
        <begin position="280"/>
        <end position="291"/>
    </location>
</feature>
<feature type="compositionally biased region" description="Low complexity" evidence="2">
    <location>
        <begin position="297"/>
        <end position="317"/>
    </location>
</feature>
<feature type="splice variant" id="VSP_036103" description="In isoform 2." evidence="4 5">
    <location>
        <begin position="1"/>
        <end position="53"/>
    </location>
</feature>
<feature type="sequence conflict" description="In Ref. 1; AF488633." evidence="6" ref="1">
    <original>N</original>
    <variation>D</variation>
    <location>
        <position position="299"/>
    </location>
</feature>
<feature type="sequence conflict" description="In Ref. 1; AF488633." evidence="6" ref="1">
    <original>I</original>
    <variation>M</variation>
    <location>
        <position position="303"/>
    </location>
</feature>
<feature type="sequence conflict" description="In Ref. 1; AF488633." evidence="6" ref="1">
    <original>S</original>
    <variation>P</variation>
    <location>
        <position position="315"/>
    </location>
</feature>
<gene>
    <name type="primary">BHLH121</name>
    <name type="synonym">EN138</name>
    <name type="ordered locus">At3g19860</name>
    <name type="ORF">MPN9.10</name>
</gene>
<name>BH121_ARATH</name>
<proteinExistence type="evidence at protein level"/>
<comment type="subunit">
    <text evidence="6">Homodimer.</text>
</comment>
<comment type="interaction">
    <interactant intactId="EBI-15197803">
        <id>Q9LT23-2</id>
    </interactant>
    <interactant intactId="EBI-15193531">
        <id>Q5XVH0</id>
        <label>BHLH109</label>
    </interactant>
    <organismsDiffer>false</organismsDiffer>
    <experiments>3</experiments>
</comment>
<comment type="interaction">
    <interactant intactId="EBI-15197803">
        <id>Q9LT23-2</id>
    </interactant>
    <interactant intactId="EBI-15193025">
        <id>Q9LXU1</id>
        <label>NOT9B</label>
    </interactant>
    <organismsDiffer>false</organismsDiffer>
    <experiments>3</experiments>
</comment>
<comment type="subcellular location">
    <subcellularLocation>
        <location evidence="1">Nucleus</location>
    </subcellularLocation>
</comment>
<comment type="alternative products">
    <event type="alternative splicing"/>
    <isoform>
        <id>Q9LT23-1</id>
        <name>1</name>
        <sequence type="displayed"/>
    </isoform>
    <isoform>
        <id>Q9LT23-2</id>
        <name>2</name>
        <sequence type="described" ref="VSP_036103"/>
    </isoform>
</comment>
<comment type="tissue specificity">
    <text evidence="3">Expressed constitutively in roots, leaves, stems, and flowers.</text>
</comment>
<reference key="1">
    <citation type="journal article" date="2003" name="Mol. Biol. Evol.">
        <title>The basic helix-loop-helix transcription factor family in plants: a genome-wide study of protein structure and functional diversity.</title>
        <authorList>
            <person name="Heim M.A."/>
            <person name="Jakoby M."/>
            <person name="Werber M."/>
            <person name="Martin C."/>
            <person name="Weisshaar B."/>
            <person name="Bailey P.C."/>
        </authorList>
    </citation>
    <scope>NUCLEOTIDE SEQUENCE [MRNA] (ISOFORM 2)</scope>
    <scope>TISSUE SPECIFICITY</scope>
    <scope>GENE FAMILY</scope>
    <scope>NOMENCLATURE</scope>
    <source>
        <strain>cv. Columbia</strain>
    </source>
</reference>
<reference key="2">
    <citation type="journal article" date="2000" name="DNA Res.">
        <title>Structural analysis of Arabidopsis thaliana chromosome 3. I. Sequence features of the regions of 4,504,864 bp covered by sixty P1 and TAC clones.</title>
        <authorList>
            <person name="Sato S."/>
            <person name="Nakamura Y."/>
            <person name="Kaneko T."/>
            <person name="Katoh T."/>
            <person name="Asamizu E."/>
            <person name="Tabata S."/>
        </authorList>
    </citation>
    <scope>NUCLEOTIDE SEQUENCE [LARGE SCALE GENOMIC DNA]</scope>
    <source>
        <strain>cv. Columbia</strain>
    </source>
</reference>
<reference key="3">
    <citation type="journal article" date="2017" name="Plant J.">
        <title>Araport11: a complete reannotation of the Arabidopsis thaliana reference genome.</title>
        <authorList>
            <person name="Cheng C.Y."/>
            <person name="Krishnakumar V."/>
            <person name="Chan A.P."/>
            <person name="Thibaud-Nissen F."/>
            <person name="Schobel S."/>
            <person name="Town C.D."/>
        </authorList>
    </citation>
    <scope>GENOME REANNOTATION</scope>
    <source>
        <strain>cv. Columbia</strain>
    </source>
</reference>
<reference key="4">
    <citation type="journal article" date="2003" name="Science">
        <title>Empirical analysis of transcriptional activity in the Arabidopsis genome.</title>
        <authorList>
            <person name="Yamada K."/>
            <person name="Lim J."/>
            <person name="Dale J.M."/>
            <person name="Chen H."/>
            <person name="Shinn P."/>
            <person name="Palm C.J."/>
            <person name="Southwick A.M."/>
            <person name="Wu H.C."/>
            <person name="Kim C.J."/>
            <person name="Nguyen M."/>
            <person name="Pham P.K."/>
            <person name="Cheuk R.F."/>
            <person name="Karlin-Newmann G."/>
            <person name="Liu S.X."/>
            <person name="Lam B."/>
            <person name="Sakano H."/>
            <person name="Wu T."/>
            <person name="Yu G."/>
            <person name="Miranda M."/>
            <person name="Quach H.L."/>
            <person name="Tripp M."/>
            <person name="Chang C.H."/>
            <person name="Lee J.M."/>
            <person name="Toriumi M.J."/>
            <person name="Chan M.M."/>
            <person name="Tang C.C."/>
            <person name="Onodera C.S."/>
            <person name="Deng J.M."/>
            <person name="Akiyama K."/>
            <person name="Ansari Y."/>
            <person name="Arakawa T."/>
            <person name="Banh J."/>
            <person name="Banno F."/>
            <person name="Bowser L."/>
            <person name="Brooks S.Y."/>
            <person name="Carninci P."/>
            <person name="Chao Q."/>
            <person name="Choy N."/>
            <person name="Enju A."/>
            <person name="Goldsmith A.D."/>
            <person name="Gurjal M."/>
            <person name="Hansen N.F."/>
            <person name="Hayashizaki Y."/>
            <person name="Johnson-Hopson C."/>
            <person name="Hsuan V.W."/>
            <person name="Iida K."/>
            <person name="Karnes M."/>
            <person name="Khan S."/>
            <person name="Koesema E."/>
            <person name="Ishida J."/>
            <person name="Jiang P.X."/>
            <person name="Jones T."/>
            <person name="Kawai J."/>
            <person name="Kamiya A."/>
            <person name="Meyers C."/>
            <person name="Nakajima M."/>
            <person name="Narusaka M."/>
            <person name="Seki M."/>
            <person name="Sakurai T."/>
            <person name="Satou M."/>
            <person name="Tamse R."/>
            <person name="Vaysberg M."/>
            <person name="Wallender E.K."/>
            <person name="Wong C."/>
            <person name="Yamamura Y."/>
            <person name="Yuan S."/>
            <person name="Shinozaki K."/>
            <person name="Davis R.W."/>
            <person name="Theologis A."/>
            <person name="Ecker J.R."/>
        </authorList>
    </citation>
    <scope>NUCLEOTIDE SEQUENCE [LARGE SCALE MRNA] (ISOFORM 2)</scope>
    <source>
        <strain>cv. Columbia</strain>
    </source>
</reference>
<reference key="5">
    <citation type="journal article" date="2003" name="Plant Cell">
        <title>The Arabidopsis basic/helix-loop-helix transcription factor family.</title>
        <authorList>
            <person name="Toledo-Ortiz G."/>
            <person name="Huq E."/>
            <person name="Quail P.H."/>
        </authorList>
    </citation>
    <scope>GENE FAMILY</scope>
</reference>
<reference key="6">
    <citation type="journal article" date="2003" name="Plant Cell">
        <title>Update on the basic helix-loop-helix transcription factor gene family in Arabidopsis thaliana.</title>
        <authorList>
            <person name="Bailey P.C."/>
            <person name="Martin C."/>
            <person name="Toledo-Ortiz G."/>
            <person name="Quail P.H."/>
            <person name="Huq E."/>
            <person name="Heim M.A."/>
            <person name="Jakoby M."/>
            <person name="Werber M."/>
            <person name="Weisshaar B."/>
        </authorList>
    </citation>
    <scope>GENE FAMILY</scope>
    <scope>NOMENCLATURE</scope>
</reference>
<dbReference type="EMBL" id="AF488633">
    <property type="status" value="NOT_ANNOTATED_CDS"/>
    <property type="molecule type" value="mRNA"/>
</dbReference>
<dbReference type="EMBL" id="AB025631">
    <property type="protein sequence ID" value="BAB01300.1"/>
    <property type="molecule type" value="Genomic_DNA"/>
</dbReference>
<dbReference type="EMBL" id="CP002686">
    <property type="protein sequence ID" value="AEE76300.1"/>
    <property type="molecule type" value="Genomic_DNA"/>
</dbReference>
<dbReference type="EMBL" id="CP002686">
    <property type="protein sequence ID" value="AEE76301.1"/>
    <property type="molecule type" value="Genomic_DNA"/>
</dbReference>
<dbReference type="EMBL" id="AY065107">
    <property type="protein sequence ID" value="AAL38283.1"/>
    <property type="molecule type" value="mRNA"/>
</dbReference>
<dbReference type="EMBL" id="AY081703">
    <property type="protein sequence ID" value="AAM10265.1"/>
    <property type="molecule type" value="mRNA"/>
</dbReference>
<dbReference type="RefSeq" id="NP_001030729.1">
    <molecule id="Q9LT23-1"/>
    <property type="nucleotide sequence ID" value="NM_001035652.4"/>
</dbReference>
<dbReference type="RefSeq" id="NP_188620.1">
    <molecule id="Q9LT23-2"/>
    <property type="nucleotide sequence ID" value="NM_112876.6"/>
</dbReference>
<dbReference type="SMR" id="Q9LT23"/>
<dbReference type="BioGRID" id="6855">
    <property type="interactions" value="17"/>
</dbReference>
<dbReference type="FunCoup" id="Q9LT23">
    <property type="interactions" value="873"/>
</dbReference>
<dbReference type="IntAct" id="Q9LT23">
    <property type="interactions" value="17"/>
</dbReference>
<dbReference type="STRING" id="3702.Q9LT23"/>
<dbReference type="iPTMnet" id="Q9LT23"/>
<dbReference type="PaxDb" id="3702-AT3G19860.2"/>
<dbReference type="EnsemblPlants" id="AT3G19860.1">
    <molecule id="Q9LT23-2"/>
    <property type="protein sequence ID" value="AT3G19860.1"/>
    <property type="gene ID" value="AT3G19860"/>
</dbReference>
<dbReference type="EnsemblPlants" id="AT3G19860.2">
    <molecule id="Q9LT23-1"/>
    <property type="protein sequence ID" value="AT3G19860.2"/>
    <property type="gene ID" value="AT3G19860"/>
</dbReference>
<dbReference type="GeneID" id="821523"/>
<dbReference type="Gramene" id="AT3G19860.1">
    <molecule id="Q9LT23-2"/>
    <property type="protein sequence ID" value="AT3G19860.1"/>
    <property type="gene ID" value="AT3G19860"/>
</dbReference>
<dbReference type="Gramene" id="AT3G19860.2">
    <molecule id="Q9LT23-1"/>
    <property type="protein sequence ID" value="AT3G19860.2"/>
    <property type="gene ID" value="AT3G19860"/>
</dbReference>
<dbReference type="KEGG" id="ath:AT3G19860"/>
<dbReference type="Araport" id="AT3G19860"/>
<dbReference type="TAIR" id="AT3G19860">
    <property type="gene designation" value="BHLH121"/>
</dbReference>
<dbReference type="eggNOG" id="ENOG502QRHF">
    <property type="taxonomic scope" value="Eukaryota"/>
</dbReference>
<dbReference type="InParanoid" id="Q9LT23"/>
<dbReference type="PhylomeDB" id="Q9LT23"/>
<dbReference type="PRO" id="PR:Q9LT23"/>
<dbReference type="Proteomes" id="UP000006548">
    <property type="component" value="Chromosome 3"/>
</dbReference>
<dbReference type="ExpressionAtlas" id="Q9LT23">
    <property type="expression patterns" value="baseline and differential"/>
</dbReference>
<dbReference type="GO" id="GO:0005634">
    <property type="term" value="C:nucleus"/>
    <property type="evidence" value="ECO:0007669"/>
    <property type="project" value="UniProtKB-SubCell"/>
</dbReference>
<dbReference type="GO" id="GO:0003700">
    <property type="term" value="F:DNA-binding transcription factor activity"/>
    <property type="evidence" value="ECO:0000250"/>
    <property type="project" value="TAIR"/>
</dbReference>
<dbReference type="GO" id="GO:0046983">
    <property type="term" value="F:protein dimerization activity"/>
    <property type="evidence" value="ECO:0007669"/>
    <property type="project" value="InterPro"/>
</dbReference>
<dbReference type="GO" id="GO:1990837">
    <property type="term" value="F:sequence-specific double-stranded DNA binding"/>
    <property type="evidence" value="ECO:0000314"/>
    <property type="project" value="TAIR"/>
</dbReference>
<dbReference type="GO" id="GO:0000976">
    <property type="term" value="F:transcription cis-regulatory region binding"/>
    <property type="evidence" value="ECO:0000353"/>
    <property type="project" value="TAIR"/>
</dbReference>
<dbReference type="GO" id="GO:0006879">
    <property type="term" value="P:intracellular iron ion homeostasis"/>
    <property type="evidence" value="ECO:0000315"/>
    <property type="project" value="TAIR"/>
</dbReference>
<dbReference type="CDD" id="cd11446">
    <property type="entry name" value="bHLH_AtILR3_like"/>
    <property type="match status" value="1"/>
</dbReference>
<dbReference type="FunFam" id="4.10.280.10:FF:000104">
    <property type="entry name" value="Transcription factor bHLH34"/>
    <property type="match status" value="1"/>
</dbReference>
<dbReference type="Gene3D" id="4.10.280.10">
    <property type="entry name" value="Helix-loop-helix DNA-binding domain"/>
    <property type="match status" value="1"/>
</dbReference>
<dbReference type="InterPro" id="IPR044579">
    <property type="entry name" value="bHLH11/121"/>
</dbReference>
<dbReference type="InterPro" id="IPR011598">
    <property type="entry name" value="bHLH_dom"/>
</dbReference>
<dbReference type="InterPro" id="IPR036638">
    <property type="entry name" value="HLH_DNA-bd_sf"/>
</dbReference>
<dbReference type="PANTHER" id="PTHR47001">
    <property type="entry name" value="TRANSCRIPTION FACTOR BHLH121"/>
    <property type="match status" value="1"/>
</dbReference>
<dbReference type="PANTHER" id="PTHR47001:SF3">
    <property type="entry name" value="TRANSCRIPTION FACTOR BHLH121"/>
    <property type="match status" value="1"/>
</dbReference>
<dbReference type="Pfam" id="PF23177">
    <property type="entry name" value="bHLH_IRO3"/>
    <property type="match status" value="1"/>
</dbReference>
<dbReference type="SMART" id="SM00353">
    <property type="entry name" value="HLH"/>
    <property type="match status" value="1"/>
</dbReference>
<dbReference type="SUPFAM" id="SSF47459">
    <property type="entry name" value="HLH, helix-loop-helix DNA-binding domain"/>
    <property type="match status" value="1"/>
</dbReference>
<dbReference type="PROSITE" id="PS50888">
    <property type="entry name" value="BHLH"/>
    <property type="match status" value="1"/>
</dbReference>
<accession>Q9LT23</accession>
<accession>Q8VZA6</accession>
<evidence type="ECO:0000255" key="1">
    <source>
        <dbReference type="PROSITE-ProRule" id="PRU00981"/>
    </source>
</evidence>
<evidence type="ECO:0000256" key="2">
    <source>
        <dbReference type="SAM" id="MobiDB-lite"/>
    </source>
</evidence>
<evidence type="ECO:0000269" key="3">
    <source>
    </source>
</evidence>
<evidence type="ECO:0000303" key="4">
    <source>
    </source>
</evidence>
<evidence type="ECO:0000303" key="5">
    <source>
    </source>
</evidence>
<evidence type="ECO:0000305" key="6"/>
<sequence length="337" mass="37920">MGIRENGIMLVSRERERARRLENRESIFAEPPCLLLAHRISPSPSILPAEEEVMDVSARKSQKAGREKLRREKLNEHFVELGNVLDPERPKNDKATILTDTVQLLKELTSEVNKLKSEYTALTDESRELTQEKNDLREEKTSLKSDIENLNLQYQQRLRSMSPWGAAMDHTVMMAPPPSFPYPMPIAMPPGSIPMHPSMPSYTYFGNQNPSMIPAPCPTYMPYMPPNTVVEQQSVHIPQNPGNRSREPRAKVSRESRSEKAEDSNEVATQLELKTPGSTSDKDTLQRPEKTKRCKRNNNNNSIEESSHSSKCSSSPSVRDHSSSSSVAGGQKPDDAK</sequence>